<accession>B0CM36</accession>
<dbReference type="EMBL" id="DP000537">
    <property type="protein sequence ID" value="ABY63628.1"/>
    <property type="molecule type" value="Genomic_DNA"/>
</dbReference>
<dbReference type="RefSeq" id="NP_001162467.1">
    <property type="nucleotide sequence ID" value="NM_001168996.1"/>
</dbReference>
<dbReference type="RefSeq" id="XP_009200507.1">
    <property type="nucleotide sequence ID" value="XM_009202243.2"/>
</dbReference>
<dbReference type="SMR" id="B0CM36"/>
<dbReference type="STRING" id="9555.ENSPANP00000012966"/>
<dbReference type="Ensembl" id="ENSPANT00000015103.3">
    <property type="protein sequence ID" value="ENSPANP00000012966.1"/>
    <property type="gene ID" value="ENSPANG00000019228.3"/>
</dbReference>
<dbReference type="GeneID" id="100137465"/>
<dbReference type="KEGG" id="panu:100137465"/>
<dbReference type="CTD" id="150082"/>
<dbReference type="eggNOG" id="ENOG502QQSE">
    <property type="taxonomic scope" value="Eukaryota"/>
</dbReference>
<dbReference type="GeneTree" id="ENSGT00560000077266"/>
<dbReference type="HOGENOM" id="CLU_026861_0_0_1"/>
<dbReference type="OMA" id="MKHQETQ"/>
<dbReference type="Proteomes" id="UP000028761">
    <property type="component" value="Chromosome 4"/>
</dbReference>
<dbReference type="Bgee" id="ENSPANG00000019228">
    <property type="expression patterns" value="Expressed in testis and 56 other cell types or tissues"/>
</dbReference>
<dbReference type="GO" id="GO:0005930">
    <property type="term" value="C:axoneme"/>
    <property type="evidence" value="ECO:0007669"/>
    <property type="project" value="TreeGrafter"/>
</dbReference>
<dbReference type="GO" id="GO:0042073">
    <property type="term" value="P:intraciliary transport"/>
    <property type="evidence" value="ECO:0007669"/>
    <property type="project" value="TreeGrafter"/>
</dbReference>
<dbReference type="InterPro" id="IPR026188">
    <property type="entry name" value="Lebercilin-like"/>
</dbReference>
<dbReference type="InterPro" id="IPR028933">
    <property type="entry name" value="Lebercilin_dom"/>
</dbReference>
<dbReference type="PANTHER" id="PTHR16650">
    <property type="entry name" value="C21ORF13-RELATED"/>
    <property type="match status" value="1"/>
</dbReference>
<dbReference type="PANTHER" id="PTHR16650:SF9">
    <property type="entry name" value="LEBERCILIN-LIKE PROTEIN"/>
    <property type="match status" value="1"/>
</dbReference>
<dbReference type="Pfam" id="PF15619">
    <property type="entry name" value="Lebercilin"/>
    <property type="match status" value="1"/>
</dbReference>
<sequence>MSLADLTKTNIDEQFSSVALENNRRSAECKRSPGTGDFSRNSNASAKSVDYSRSQCSCGSLSSQYDYSEDFLCDCSEKAINRNYLKQPVVKEKEKKKYNVSKISQSKGQKEISVGKKHTWNASLFNSQIHMIAQRRDAMAHRILSARLHKIKGLKNELADMHHKLEAILTENQFLKQLQLRHLKAIGKYENSQNNLPQIMAKHQNEVKNLRQLLRKSQEKERTVSRKLRETDSQLLKTKDTLQALQKLSEDKNLAEREELTHKLSIITTKMEANDKKIQSLEKQLRLNSRAFSRQLAIETRKTLAAQTATKTLQVEVKHLQQKLKEKDRELEIKNIYSHRILKNLHDTEDYPKVSSTKSVQADRKSLPFTSMRHQGTQKSDVAPLTTKGKKATGNMDRKEKSTEINREIPHCVNKLPKQEDSKTKYEDLSREEKHLEVQVLLENTGRQKDKKEDQEKKTIFVKEEQELPPKIIEVIHPERESTQEDVLVREKFKRSMQRNGMDDTPDKCTAPYTKGPLRQRRHYSFTEATENLHHGLPASGGPANAGNTKYSHSTSKHLSNREEMELEHSDSGYEPSFGKSSRIKAKDTTFRDKKSSLMEELFGSGYVLKTDQSSPGVAKGSEEPLQSKESHPLPPSQASASNAFGDSKVTVVNSIKPSSPTEGKRKIII</sequence>
<evidence type="ECO:0000250" key="1">
    <source>
        <dbReference type="UniProtKB" id="O95447"/>
    </source>
</evidence>
<evidence type="ECO:0000255" key="2"/>
<evidence type="ECO:0000256" key="3">
    <source>
        <dbReference type="SAM" id="MobiDB-lite"/>
    </source>
</evidence>
<evidence type="ECO:0000305" key="4"/>
<evidence type="ECO:0000312" key="5">
    <source>
        <dbReference type="EMBL" id="ABY63628.1"/>
    </source>
</evidence>
<proteinExistence type="inferred from homology"/>
<feature type="chain" id="PRO_0000331230" description="Lebercilin-like protein">
    <location>
        <begin position="1"/>
        <end position="670"/>
    </location>
</feature>
<feature type="region of interest" description="Disordered" evidence="3">
    <location>
        <begin position="24"/>
        <end position="44"/>
    </location>
</feature>
<feature type="region of interest" description="Disordered" evidence="3">
    <location>
        <begin position="351"/>
        <end position="402"/>
    </location>
</feature>
<feature type="region of interest" description="Disordered" evidence="3">
    <location>
        <begin position="495"/>
        <end position="520"/>
    </location>
</feature>
<feature type="region of interest" description="Disordered" evidence="3">
    <location>
        <begin position="533"/>
        <end position="594"/>
    </location>
</feature>
<feature type="region of interest" description="Disordered" evidence="3">
    <location>
        <begin position="606"/>
        <end position="647"/>
    </location>
</feature>
<feature type="coiled-coil region" evidence="2">
    <location>
        <begin position="148"/>
        <end position="259"/>
    </location>
</feature>
<feature type="coiled-coil region" evidence="2">
    <location>
        <begin position="305"/>
        <end position="336"/>
    </location>
</feature>
<feature type="coiled-coil region" evidence="2">
    <location>
        <begin position="420"/>
        <end position="440"/>
    </location>
</feature>
<feature type="compositionally biased region" description="Polar residues" evidence="3">
    <location>
        <begin position="368"/>
        <end position="380"/>
    </location>
</feature>
<feature type="compositionally biased region" description="Polar residues" evidence="3">
    <location>
        <begin position="546"/>
        <end position="558"/>
    </location>
</feature>
<feature type="compositionally biased region" description="Basic and acidic residues" evidence="3">
    <location>
        <begin position="560"/>
        <end position="572"/>
    </location>
</feature>
<feature type="compositionally biased region" description="Basic and acidic residues" evidence="3">
    <location>
        <begin position="585"/>
        <end position="594"/>
    </location>
</feature>
<feature type="compositionally biased region" description="Basic and acidic residues" evidence="3">
    <location>
        <begin position="621"/>
        <end position="632"/>
    </location>
</feature>
<feature type="compositionally biased region" description="Polar residues" evidence="3">
    <location>
        <begin position="637"/>
        <end position="647"/>
    </location>
</feature>
<comment type="similarity">
    <text evidence="4">Belongs to the LCA5 family.</text>
</comment>
<organism>
    <name type="scientific">Papio anubis</name>
    <name type="common">Olive baboon</name>
    <dbReference type="NCBI Taxonomy" id="9555"/>
    <lineage>
        <taxon>Eukaryota</taxon>
        <taxon>Metazoa</taxon>
        <taxon>Chordata</taxon>
        <taxon>Craniata</taxon>
        <taxon>Vertebrata</taxon>
        <taxon>Euteleostomi</taxon>
        <taxon>Mammalia</taxon>
        <taxon>Eutheria</taxon>
        <taxon>Euarchontoglires</taxon>
        <taxon>Primates</taxon>
        <taxon>Haplorrhini</taxon>
        <taxon>Catarrhini</taxon>
        <taxon>Cercopithecidae</taxon>
        <taxon>Cercopithecinae</taxon>
        <taxon>Papio</taxon>
    </lineage>
</organism>
<reference evidence="5" key="1">
    <citation type="submission" date="2008-01" db="EMBL/GenBank/DDBJ databases">
        <title>NISC comparative sequencing initiative.</title>
        <authorList>
            <person name="Antonellis A."/>
            <person name="Benjamin B."/>
            <person name="Blakesley R.W."/>
            <person name="Bouffard G.G."/>
            <person name="Brinkley C."/>
            <person name="Brooks S."/>
            <person name="Chu G."/>
            <person name="Chub I."/>
            <person name="Coleman H."/>
            <person name="Fuksenko T."/>
            <person name="Gestole M."/>
            <person name="Gregory M."/>
            <person name="Guan X."/>
            <person name="Gupta J."/>
            <person name="Gurson N."/>
            <person name="Han E."/>
            <person name="Han J."/>
            <person name="Hansen N."/>
            <person name="Hargrove A."/>
            <person name="Hines-Harris K."/>
            <person name="Ho S.-L."/>
            <person name="Hu P."/>
            <person name="Hunter G."/>
            <person name="Hurle B."/>
            <person name="Idol J.R."/>
            <person name="Johnson T."/>
            <person name="Knight E."/>
            <person name="Kwong P."/>
            <person name="Lee-Lin S.-Q."/>
            <person name="Legaspi R."/>
            <person name="Madden M."/>
            <person name="Maduro Q.L."/>
            <person name="Maduro V.B."/>
            <person name="Margulies E.H."/>
            <person name="Masiello C."/>
            <person name="Maskeri B."/>
            <person name="McDowell J."/>
            <person name="Merkulov G."/>
            <person name="Montemayor C."/>
            <person name="Mullikin J.C."/>
            <person name="Park M."/>
            <person name="Prasad A."/>
            <person name="Ramsahoye C."/>
            <person name="Reddix-Dugue N."/>
            <person name="Riebow N."/>
            <person name="Schandler K."/>
            <person name="Schueler M.G."/>
            <person name="Sison C."/>
            <person name="Smith L."/>
            <person name="Stantripop S."/>
            <person name="Thomas J.W."/>
            <person name="Thomas P.J."/>
            <person name="Tsipouri V."/>
            <person name="Young A."/>
            <person name="Green E.D."/>
        </authorList>
    </citation>
    <scope>NUCLEOTIDE SEQUENCE [LARGE SCALE GENOMIC DNA]</scope>
</reference>
<protein>
    <recommendedName>
        <fullName>Lebercilin-like protein</fullName>
    </recommendedName>
    <alternativeName>
        <fullName>Leber congenital amaurosis 5-like protein</fullName>
    </alternativeName>
</protein>
<name>LCA5L_PAPAN</name>
<keyword id="KW-0175">Coiled coil</keyword>
<keyword id="KW-1185">Reference proteome</keyword>
<gene>
    <name evidence="1" type="primary">LCA5L</name>
</gene>